<comment type="function">
    <text evidence="2">Plays a key role in the replacement of histones to protamine in the elongating spermatids of mammals. In condensing spermatids, loaded onto the nucleosomes, where it promotes the recruitment and processing of protamines, which are responsible for histone eviction.</text>
</comment>
<comment type="interaction">
    <interactant intactId="EBI-12039775">
        <id>Q05952</id>
    </interactant>
    <interactant intactId="EBI-743771">
        <id>Q92624</id>
        <label>APPBP2</label>
    </interactant>
    <organismsDiffer>false</organismsDiffer>
    <experiments>3</experiments>
</comment>
<comment type="interaction">
    <interactant intactId="EBI-12039775">
        <id>Q05952</id>
    </interactant>
    <interactant intactId="EBI-11959885">
        <id>Q07627</id>
        <label>KRTAP1-1</label>
    </interactant>
    <organismsDiffer>false</organismsDiffer>
    <experiments>3</experiments>
</comment>
<comment type="interaction">
    <interactant intactId="EBI-12039775">
        <id>Q05952</id>
    </interactant>
    <interactant intactId="EBI-10171774">
        <id>P60410</id>
        <label>KRTAP10-8</label>
    </interactant>
    <organismsDiffer>false</organismsDiffer>
    <experiments>3</experiments>
</comment>
<comment type="interaction">
    <interactant intactId="EBI-12039775">
        <id>Q05952</id>
    </interactant>
    <interactant intactId="EBI-10172052">
        <id>P60411</id>
        <label>KRTAP10-9</label>
    </interactant>
    <organismsDiffer>false</organismsDiffer>
    <experiments>3</experiments>
</comment>
<comment type="interaction">
    <interactant intactId="EBI-12039775">
        <id>Q05952</id>
    </interactant>
    <interactant intactId="EBI-11953334">
        <id>P60328</id>
        <label>KRTAP12-3</label>
    </interactant>
    <organismsDiffer>false</organismsDiffer>
    <experiments>3</experiments>
</comment>
<comment type="interaction">
    <interactant intactId="EBI-12039775">
        <id>Q05952</id>
    </interactant>
    <interactant intactId="EBI-14065470">
        <id>Q9BYR9</id>
        <label>KRTAP2-4</label>
    </interactant>
    <organismsDiffer>false</organismsDiffer>
    <experiments>3</experiments>
</comment>
<comment type="interaction">
    <interactant intactId="EBI-12039775">
        <id>Q05952</id>
    </interactant>
    <interactant intactId="EBI-724076">
        <id>Q99750</id>
        <label>MDFI</label>
    </interactant>
    <organismsDiffer>false</organismsDiffer>
    <experiments>4</experiments>
</comment>
<comment type="subcellular location">
    <subcellularLocation>
        <location evidence="1">Nucleus</location>
    </subcellularLocation>
    <subcellularLocation>
        <location evidence="1">Nucleus</location>
        <location evidence="1">Nucleolus</location>
    </subcellularLocation>
    <subcellularLocation>
        <location evidence="1">Chromosome</location>
    </subcellularLocation>
    <text evidence="1 2">Loaded onto the nucleosomes of condensing spermatids (By similarity). Nuclear import is mediated by IPO4. Nucleolar localization requires the protein to be phosphorylated (By similarity).</text>
</comment>
<comment type="tissue specificity">
    <text evidence="4">Expressed by spermatids (at protein level).</text>
</comment>
<comment type="similarity">
    <text evidence="5">Belongs to the nuclear transition protein 2 family.</text>
</comment>
<reference key="1">
    <citation type="journal article" date="1993" name="J. Biol. Chem.">
        <title>Linkage of human spermatid-specific basic nuclear protein genes. Definition and evolution of the P1--&gt;P2--&gt;TP2 locus.</title>
        <authorList>
            <person name="Nelson J.E."/>
            <person name="Krawetz S.A."/>
        </authorList>
    </citation>
    <scope>NUCLEOTIDE SEQUENCE [GENOMIC DNA]</scope>
</reference>
<reference key="2">
    <citation type="journal article" date="1994" name="J. Biol. Chem.">
        <title>Characterization of a human locus in transition.</title>
        <authorList>
            <person name="Nelson J.E."/>
            <person name="Krawetz S.A."/>
        </authorList>
    </citation>
    <scope>NUCLEOTIDE SEQUENCE [GENOMIC DNA]</scope>
</reference>
<reference key="3">
    <citation type="journal article" date="1992" name="Genomics">
        <title>The gene for human transition protein 2: nucleotide sequence, assignment to the protamine gene cluster, and evidence for its low expression.</title>
        <authorList>
            <person name="Schluter G."/>
            <person name="Kremling H."/>
            <person name="Engel W."/>
        </authorList>
    </citation>
    <scope>NUCLEOTIDE SEQUENCE [GENOMIC DNA / MRNA]</scope>
</reference>
<reference key="4">
    <citation type="journal article" date="2000" name="Nature">
        <title>Rapid evolution of male reproductive genes in the descent of man.</title>
        <authorList>
            <person name="Wyckoff G.J."/>
            <person name="Wang W."/>
            <person name="Wu C.-I."/>
        </authorList>
    </citation>
    <scope>NUCLEOTIDE SEQUENCE [GENOMIC DNA] OF 1-133</scope>
</reference>
<reference key="5">
    <citation type="journal article" date="1998" name="Mol. Hum. Reprod.">
        <title>Expression of mRNA and protein of nucleoproteins during human spermiogenesis.</title>
        <authorList>
            <person name="Steger K."/>
            <person name="Klonisch T."/>
            <person name="Gavenis K."/>
            <person name="Drabent B."/>
            <person name="Doenecke D."/>
            <person name="Bergmann M."/>
        </authorList>
    </citation>
    <scope>TISSUE SPECIFICITY</scope>
</reference>
<protein>
    <recommendedName>
        <fullName>Nuclear transition protein 2</fullName>
        <shortName>TP-2</shortName>
        <shortName>TP2</shortName>
    </recommendedName>
</protein>
<name>STP2_HUMAN</name>
<evidence type="ECO:0000250" key="1">
    <source>
        <dbReference type="UniProtKB" id="P11101"/>
    </source>
</evidence>
<evidence type="ECO:0000250" key="2">
    <source>
        <dbReference type="UniProtKB" id="P11378"/>
    </source>
</evidence>
<evidence type="ECO:0000256" key="3">
    <source>
        <dbReference type="SAM" id="MobiDB-lite"/>
    </source>
</evidence>
<evidence type="ECO:0000269" key="4">
    <source>
    </source>
</evidence>
<evidence type="ECO:0000305" key="5"/>
<organism>
    <name type="scientific">Homo sapiens</name>
    <name type="common">Human</name>
    <dbReference type="NCBI Taxonomy" id="9606"/>
    <lineage>
        <taxon>Eukaryota</taxon>
        <taxon>Metazoa</taxon>
        <taxon>Chordata</taxon>
        <taxon>Craniata</taxon>
        <taxon>Vertebrata</taxon>
        <taxon>Euteleostomi</taxon>
        <taxon>Mammalia</taxon>
        <taxon>Eutheria</taxon>
        <taxon>Euarchontoglires</taxon>
        <taxon>Primates</taxon>
        <taxon>Haplorrhini</taxon>
        <taxon>Catarrhini</taxon>
        <taxon>Hominidae</taxon>
        <taxon>Homo</taxon>
    </lineage>
</organism>
<gene>
    <name type="primary">TNP2</name>
</gene>
<dbReference type="EMBL" id="L03378">
    <property type="protein sequence ID" value="AAA61203.1"/>
    <property type="molecule type" value="Genomic_DNA"/>
</dbReference>
<dbReference type="EMBL" id="U15422">
    <property type="protein sequence ID" value="AAC50488.1"/>
    <property type="molecule type" value="Genomic_DNA"/>
</dbReference>
<dbReference type="EMBL" id="X63758">
    <property type="protein sequence ID" value="CAA45290.1"/>
    <property type="molecule type" value="mRNA"/>
</dbReference>
<dbReference type="EMBL" id="X63759">
    <property type="protein sequence ID" value="CAA45291.1"/>
    <property type="molecule type" value="mRNA"/>
</dbReference>
<dbReference type="EMBL" id="Z46940">
    <property type="protein sequence ID" value="CAA87067.1"/>
    <property type="molecule type" value="Genomic_DNA"/>
</dbReference>
<dbReference type="EMBL" id="AF215715">
    <property type="protein sequence ID" value="AAF35854.1"/>
    <property type="molecule type" value="Genomic_DNA"/>
</dbReference>
<dbReference type="CCDS" id="CCDS45410.1"/>
<dbReference type="PIR" id="A44477">
    <property type="entry name" value="BGHU2"/>
</dbReference>
<dbReference type="RefSeq" id="NP_005416.1">
    <property type="nucleotide sequence ID" value="NM_005425.5"/>
</dbReference>
<dbReference type="SMR" id="Q05952"/>
<dbReference type="BioGRID" id="112996">
    <property type="interactions" value="33"/>
</dbReference>
<dbReference type="FunCoup" id="Q05952">
    <property type="interactions" value="3"/>
</dbReference>
<dbReference type="IntAct" id="Q05952">
    <property type="interactions" value="19"/>
</dbReference>
<dbReference type="STRING" id="9606.ENSP00000325738"/>
<dbReference type="iPTMnet" id="Q05952"/>
<dbReference type="PhosphoSitePlus" id="Q05952"/>
<dbReference type="BioMuta" id="TNP2"/>
<dbReference type="DMDM" id="464818"/>
<dbReference type="MassIVE" id="Q05952"/>
<dbReference type="PaxDb" id="9606-ENSP00000325738"/>
<dbReference type="Antibodypedia" id="65957">
    <property type="antibodies" value="121 antibodies from 20 providers"/>
</dbReference>
<dbReference type="DNASU" id="7142"/>
<dbReference type="Ensembl" id="ENST00000312693.4">
    <property type="protein sequence ID" value="ENSP00000325738.3"/>
    <property type="gene ID" value="ENSG00000178279.4"/>
</dbReference>
<dbReference type="GeneID" id="7142"/>
<dbReference type="KEGG" id="hsa:7142"/>
<dbReference type="MANE-Select" id="ENST00000312693.4">
    <property type="protein sequence ID" value="ENSP00000325738.3"/>
    <property type="RefSeq nucleotide sequence ID" value="NM_005425.5"/>
    <property type="RefSeq protein sequence ID" value="NP_005416.1"/>
</dbReference>
<dbReference type="AGR" id="HGNC:11952"/>
<dbReference type="CTD" id="7142"/>
<dbReference type="DisGeNET" id="7142"/>
<dbReference type="GeneCards" id="TNP2"/>
<dbReference type="HGNC" id="HGNC:11952">
    <property type="gene designation" value="TNP2"/>
</dbReference>
<dbReference type="HPA" id="ENSG00000178279">
    <property type="expression patterns" value="Tissue enriched (testis)"/>
</dbReference>
<dbReference type="MIM" id="190232">
    <property type="type" value="gene"/>
</dbReference>
<dbReference type="neXtProt" id="NX_Q05952"/>
<dbReference type="OpenTargets" id="ENSG00000178279"/>
<dbReference type="PharmGKB" id="PA36641"/>
<dbReference type="VEuPathDB" id="HostDB:ENSG00000178279"/>
<dbReference type="eggNOG" id="KOG4566">
    <property type="taxonomic scope" value="Eukaryota"/>
</dbReference>
<dbReference type="GeneTree" id="ENSGT00390000008176"/>
<dbReference type="HOGENOM" id="CLU_152028_0_0_1"/>
<dbReference type="InParanoid" id="Q05952"/>
<dbReference type="OMA" id="SCSHHCQ"/>
<dbReference type="OrthoDB" id="9809326at2759"/>
<dbReference type="PAN-GO" id="Q05952">
    <property type="GO annotations" value="4 GO annotations based on evolutionary models"/>
</dbReference>
<dbReference type="PhylomeDB" id="Q05952"/>
<dbReference type="TreeFam" id="TF338516"/>
<dbReference type="PathwayCommons" id="Q05952"/>
<dbReference type="SignaLink" id="Q05952"/>
<dbReference type="BioGRID-ORCS" id="7142">
    <property type="hits" value="13 hits in 1143 CRISPR screens"/>
</dbReference>
<dbReference type="CD-CODE" id="91857CE7">
    <property type="entry name" value="Nucleolus"/>
</dbReference>
<dbReference type="GeneWiki" id="TNP2"/>
<dbReference type="GenomeRNAi" id="7142"/>
<dbReference type="Pharos" id="Q05952">
    <property type="development level" value="Tbio"/>
</dbReference>
<dbReference type="PRO" id="PR:Q05952"/>
<dbReference type="Proteomes" id="UP000005640">
    <property type="component" value="Chromosome 16"/>
</dbReference>
<dbReference type="RNAct" id="Q05952">
    <property type="molecule type" value="protein"/>
</dbReference>
<dbReference type="Bgee" id="ENSG00000178279">
    <property type="expression patterns" value="Expressed in sperm and 35 other cell types or tissues"/>
</dbReference>
<dbReference type="ExpressionAtlas" id="Q05952">
    <property type="expression patterns" value="baseline and differential"/>
</dbReference>
<dbReference type="GO" id="GO:0005730">
    <property type="term" value="C:nucleolus"/>
    <property type="evidence" value="ECO:0007669"/>
    <property type="project" value="UniProtKB-SubCell"/>
</dbReference>
<dbReference type="GO" id="GO:0000786">
    <property type="term" value="C:nucleosome"/>
    <property type="evidence" value="ECO:0000250"/>
    <property type="project" value="UniProtKB"/>
</dbReference>
<dbReference type="GO" id="GO:0003677">
    <property type="term" value="F:DNA binding"/>
    <property type="evidence" value="ECO:0007669"/>
    <property type="project" value="UniProtKB-KW"/>
</dbReference>
<dbReference type="GO" id="GO:0008270">
    <property type="term" value="F:zinc ion binding"/>
    <property type="evidence" value="ECO:0000318"/>
    <property type="project" value="GO_Central"/>
</dbReference>
<dbReference type="GO" id="GO:0007340">
    <property type="term" value="P:acrosome reaction"/>
    <property type="evidence" value="ECO:0000318"/>
    <property type="project" value="GO_Central"/>
</dbReference>
<dbReference type="GO" id="GO:0007341">
    <property type="term" value="P:penetration of zona pellucida"/>
    <property type="evidence" value="ECO:0000318"/>
    <property type="project" value="GO_Central"/>
</dbReference>
<dbReference type="GO" id="GO:0010954">
    <property type="term" value="P:positive regulation of protein processing"/>
    <property type="evidence" value="ECO:0000250"/>
    <property type="project" value="UniProtKB"/>
</dbReference>
<dbReference type="GO" id="GO:0035092">
    <property type="term" value="P:sperm DNA condensation"/>
    <property type="evidence" value="ECO:0000250"/>
    <property type="project" value="UniProtKB"/>
</dbReference>
<dbReference type="GO" id="GO:0007283">
    <property type="term" value="P:spermatogenesis"/>
    <property type="evidence" value="ECO:0000318"/>
    <property type="project" value="GO_Central"/>
</dbReference>
<dbReference type="InterPro" id="IPR000678">
    <property type="entry name" value="TP2"/>
</dbReference>
<dbReference type="PANTHER" id="PTHR17488">
    <property type="entry name" value="NUCLEAR TRANSITION PROTEIN 2"/>
    <property type="match status" value="1"/>
</dbReference>
<dbReference type="PANTHER" id="PTHR17488:SF0">
    <property type="entry name" value="NUCLEAR TRANSITION PROTEIN 2"/>
    <property type="match status" value="1"/>
</dbReference>
<dbReference type="Pfam" id="PF01254">
    <property type="entry name" value="TP2"/>
    <property type="match status" value="1"/>
</dbReference>
<dbReference type="PROSITE" id="PS00970">
    <property type="entry name" value="TP2_1"/>
    <property type="match status" value="1"/>
</dbReference>
<dbReference type="PROSITE" id="PS00971">
    <property type="entry name" value="TP2_2"/>
    <property type="match status" value="1"/>
</dbReference>
<proteinExistence type="evidence at protein level"/>
<keyword id="KW-0158">Chromosome</keyword>
<keyword id="KW-0217">Developmental protein</keyword>
<keyword id="KW-0221">Differentiation</keyword>
<keyword id="KW-0238">DNA-binding</keyword>
<keyword id="KW-0479">Metal-binding</keyword>
<keyword id="KW-0544">Nucleosome core</keyword>
<keyword id="KW-0539">Nucleus</keyword>
<keyword id="KW-0597">Phosphoprotein</keyword>
<keyword id="KW-1185">Reference proteome</keyword>
<keyword id="KW-0744">Spermatogenesis</keyword>
<keyword id="KW-0862">Zinc</keyword>
<sequence length="138" mass="15641">MDTQTHSLPITHTQLHSNSQPQSRTCTRHCQTFSQSCRQSHRGSRSQSSSQSPASHRNPTGAHSSSGHQSQSPNTSPPPKRHKKTMNSHHSPMRPTILHCRCPKNRKNLEGKLKKKKMAKRIQQVYKTKTRSSGWKSN</sequence>
<accession>Q05952</accession>
<accession>Q9NZB0</accession>
<feature type="chain" id="PRO_0000191425" description="Nuclear transition protein 2">
    <location>
        <begin position="1"/>
        <end position="138"/>
    </location>
</feature>
<feature type="region of interest" description="Disordered" evidence="3">
    <location>
        <begin position="1"/>
        <end position="138"/>
    </location>
</feature>
<feature type="short sequence motif" description="Nuclear localization signal" evidence="1">
    <location>
        <begin position="111"/>
        <end position="119"/>
    </location>
</feature>
<feature type="compositionally biased region" description="Polar residues" evidence="3">
    <location>
        <begin position="1"/>
        <end position="33"/>
    </location>
</feature>
<feature type="compositionally biased region" description="Low complexity" evidence="3">
    <location>
        <begin position="45"/>
        <end position="72"/>
    </location>
</feature>
<feature type="compositionally biased region" description="Polar residues" evidence="3">
    <location>
        <begin position="125"/>
        <end position="138"/>
    </location>
</feature>
<feature type="binding site" evidence="1">
    <location>
        <position position="12"/>
    </location>
    <ligand>
        <name>Zn(2+)</name>
        <dbReference type="ChEBI" id="CHEBI:29105"/>
    </ligand>
</feature>
<feature type="binding site" evidence="1">
    <location>
        <position position="16"/>
    </location>
    <ligand>
        <name>Zn(2+)</name>
        <dbReference type="ChEBI" id="CHEBI:29105"/>
    </ligand>
</feature>
<feature type="binding site" evidence="1">
    <location>
        <position position="26"/>
    </location>
    <ligand>
        <name>Zn(2+)</name>
        <dbReference type="ChEBI" id="CHEBI:29105"/>
    </ligand>
</feature>
<feature type="binding site" evidence="1">
    <location>
        <position position="30"/>
    </location>
    <ligand>
        <name>Zn(2+)</name>
        <dbReference type="ChEBI" id="CHEBI:29105"/>
    </ligand>
</feature>
<feature type="modified residue" description="Phosphoserine" evidence="1">
    <location>
        <position position="133"/>
    </location>
</feature>
<feature type="sequence variant" id="VAR_052157" description="In dbSNP:rs11640138.">
    <original>R</original>
    <variation>W</variation>
    <location>
        <position position="131"/>
    </location>
</feature>